<protein>
    <recommendedName>
        <fullName evidence="1">Sec-independent protein translocase protein TatB</fullName>
    </recommendedName>
</protein>
<gene>
    <name evidence="1" type="primary">tatB</name>
    <name type="ordered locus">ELI_01600</name>
</gene>
<dbReference type="EMBL" id="CP000157">
    <property type="protein sequence ID" value="ABC62412.1"/>
    <property type="molecule type" value="Genomic_DNA"/>
</dbReference>
<dbReference type="RefSeq" id="WP_011413288.1">
    <property type="nucleotide sequence ID" value="NC_007722.1"/>
</dbReference>
<dbReference type="SMR" id="Q2ND29"/>
<dbReference type="STRING" id="314225.ELI_01600"/>
<dbReference type="KEGG" id="eli:ELI_01600"/>
<dbReference type="eggNOG" id="COG1826">
    <property type="taxonomic scope" value="Bacteria"/>
</dbReference>
<dbReference type="HOGENOM" id="CLU_086034_1_5_5"/>
<dbReference type="OrthoDB" id="7206969at2"/>
<dbReference type="Proteomes" id="UP000008808">
    <property type="component" value="Chromosome"/>
</dbReference>
<dbReference type="GO" id="GO:0033281">
    <property type="term" value="C:TAT protein transport complex"/>
    <property type="evidence" value="ECO:0007669"/>
    <property type="project" value="UniProtKB-UniRule"/>
</dbReference>
<dbReference type="GO" id="GO:0008320">
    <property type="term" value="F:protein transmembrane transporter activity"/>
    <property type="evidence" value="ECO:0007669"/>
    <property type="project" value="UniProtKB-UniRule"/>
</dbReference>
<dbReference type="GO" id="GO:0043953">
    <property type="term" value="P:protein transport by the Tat complex"/>
    <property type="evidence" value="ECO:0007669"/>
    <property type="project" value="UniProtKB-UniRule"/>
</dbReference>
<dbReference type="Gene3D" id="1.20.5.3310">
    <property type="match status" value="1"/>
</dbReference>
<dbReference type="HAMAP" id="MF_00237">
    <property type="entry name" value="TatB"/>
    <property type="match status" value="1"/>
</dbReference>
<dbReference type="InterPro" id="IPR003369">
    <property type="entry name" value="TatA/B/E"/>
</dbReference>
<dbReference type="InterPro" id="IPR018448">
    <property type="entry name" value="TatB"/>
</dbReference>
<dbReference type="NCBIfam" id="TIGR01410">
    <property type="entry name" value="tatB"/>
    <property type="match status" value="1"/>
</dbReference>
<dbReference type="PANTHER" id="PTHR33162">
    <property type="entry name" value="SEC-INDEPENDENT PROTEIN TRANSLOCASE PROTEIN TATA, CHLOROPLASTIC"/>
    <property type="match status" value="1"/>
</dbReference>
<dbReference type="PANTHER" id="PTHR33162:SF1">
    <property type="entry name" value="SEC-INDEPENDENT PROTEIN TRANSLOCASE PROTEIN TATA, CHLOROPLASTIC"/>
    <property type="match status" value="1"/>
</dbReference>
<dbReference type="Pfam" id="PF02416">
    <property type="entry name" value="TatA_B_E"/>
    <property type="match status" value="1"/>
</dbReference>
<dbReference type="PRINTS" id="PR01506">
    <property type="entry name" value="TATBPROTEIN"/>
</dbReference>
<feature type="chain" id="PRO_0000301167" description="Sec-independent protein translocase protein TatB">
    <location>
        <begin position="1"/>
        <end position="138"/>
    </location>
</feature>
<feature type="transmembrane region" description="Helical" evidence="1">
    <location>
        <begin position="1"/>
        <end position="21"/>
    </location>
</feature>
<feature type="region of interest" description="Disordered" evidence="2">
    <location>
        <begin position="74"/>
        <end position="138"/>
    </location>
</feature>
<feature type="compositionally biased region" description="Low complexity" evidence="2">
    <location>
        <begin position="83"/>
        <end position="97"/>
    </location>
</feature>
<feature type="compositionally biased region" description="Basic and acidic residues" evidence="2">
    <location>
        <begin position="98"/>
        <end position="138"/>
    </location>
</feature>
<sequence>MFDIGATELLVIAIVAILVIGPKDMPLALRTAGRWIGKIRQVSSHFRTGLDAMIREAEIEEMDKKWRERNAEIMAKHPADQMQPLDAPDPALSAAEARAAHTEAAKPARAAEETQADRASADEHPAASEPRLPLEGRD</sequence>
<comment type="function">
    <text evidence="1">Part of the twin-arginine translocation (Tat) system that transports large folded proteins containing a characteristic twin-arginine motif in their signal peptide across membranes. Together with TatC, TatB is part of a receptor directly interacting with Tat signal peptides. TatB may form an oligomeric binding site that transiently accommodates folded Tat precursor proteins before their translocation.</text>
</comment>
<comment type="subunit">
    <text evidence="1">The Tat system comprises two distinct complexes: a TatABC complex, containing multiple copies of TatA, TatB and TatC subunits, and a separate TatA complex, containing only TatA subunits. Substrates initially bind to the TatABC complex, which probably triggers association of the separate TatA complex to form the active translocon.</text>
</comment>
<comment type="subcellular location">
    <subcellularLocation>
        <location evidence="1">Cell inner membrane</location>
        <topology evidence="1">Single-pass membrane protein</topology>
    </subcellularLocation>
</comment>
<comment type="similarity">
    <text evidence="1">Belongs to the TatB family.</text>
</comment>
<accession>Q2ND29</accession>
<name>TATB_ERYLH</name>
<keyword id="KW-0997">Cell inner membrane</keyword>
<keyword id="KW-1003">Cell membrane</keyword>
<keyword id="KW-0472">Membrane</keyword>
<keyword id="KW-0653">Protein transport</keyword>
<keyword id="KW-1185">Reference proteome</keyword>
<keyword id="KW-0811">Translocation</keyword>
<keyword id="KW-0812">Transmembrane</keyword>
<keyword id="KW-1133">Transmembrane helix</keyword>
<keyword id="KW-0813">Transport</keyword>
<reference key="1">
    <citation type="journal article" date="2009" name="J. Bacteriol.">
        <title>Complete genome sequence of Erythrobacter litoralis HTCC2594.</title>
        <authorList>
            <person name="Oh H.M."/>
            <person name="Giovannoni S.J."/>
            <person name="Ferriera S."/>
            <person name="Johnson J."/>
            <person name="Cho J.C."/>
        </authorList>
    </citation>
    <scope>NUCLEOTIDE SEQUENCE [LARGE SCALE GENOMIC DNA]</scope>
    <source>
        <strain>HTCC2594</strain>
    </source>
</reference>
<organism>
    <name type="scientific">Erythrobacter litoralis (strain HTCC2594)</name>
    <dbReference type="NCBI Taxonomy" id="314225"/>
    <lineage>
        <taxon>Bacteria</taxon>
        <taxon>Pseudomonadati</taxon>
        <taxon>Pseudomonadota</taxon>
        <taxon>Alphaproteobacteria</taxon>
        <taxon>Sphingomonadales</taxon>
        <taxon>Erythrobacteraceae</taxon>
        <taxon>Erythrobacter/Porphyrobacter group</taxon>
        <taxon>Erythrobacter</taxon>
    </lineage>
</organism>
<evidence type="ECO:0000255" key="1">
    <source>
        <dbReference type="HAMAP-Rule" id="MF_00237"/>
    </source>
</evidence>
<evidence type="ECO:0000256" key="2">
    <source>
        <dbReference type="SAM" id="MobiDB-lite"/>
    </source>
</evidence>
<proteinExistence type="inferred from homology"/>